<evidence type="ECO:0000250" key="1"/>
<evidence type="ECO:0000255" key="2">
    <source>
        <dbReference type="PROSITE-ProRule" id="PRU00064"/>
    </source>
</evidence>
<evidence type="ECO:0000255" key="3">
    <source>
        <dbReference type="PROSITE-ProRule" id="PRU00204"/>
    </source>
</evidence>
<comment type="function">
    <text evidence="1">Adapter protein involved in the Toll-like receptor and IL-1 receptor signaling pathway in the innate immune response. Activates expression of target genes in the Spemann organizer region during early embryonic development. Is required for normal axis formation (By similarity).</text>
</comment>
<comment type="subcellular location">
    <subcellularLocation>
        <location evidence="1">Cytoplasm</location>
    </subcellularLocation>
</comment>
<comment type="domain">
    <text evidence="1">The intermediate domain (ID) is required for the phosphorylation and activation of IRAK.</text>
</comment>
<dbReference type="EMBL" id="BC089284">
    <property type="protein sequence ID" value="AAH89284.1"/>
    <property type="molecule type" value="mRNA"/>
</dbReference>
<dbReference type="RefSeq" id="NP_001089255.1">
    <property type="nucleotide sequence ID" value="NM_001095786.1"/>
</dbReference>
<dbReference type="SMR" id="Q5FWM2"/>
<dbReference type="DNASU" id="734302"/>
<dbReference type="GeneID" id="734302"/>
<dbReference type="KEGG" id="xla:734302"/>
<dbReference type="AGR" id="Xenbase:XB-GENE-6251474"/>
<dbReference type="CTD" id="734302"/>
<dbReference type="Xenbase" id="XB-GENE-6251474">
    <property type="gene designation" value="myd88.S"/>
</dbReference>
<dbReference type="OrthoDB" id="10037120at2759"/>
<dbReference type="Proteomes" id="UP000186698">
    <property type="component" value="Chromosome 6S"/>
</dbReference>
<dbReference type="Bgee" id="734302">
    <property type="expression patterns" value="Expressed in oocyte and 19 other cell types or tissues"/>
</dbReference>
<dbReference type="GO" id="GO:0005737">
    <property type="term" value="C:cytoplasm"/>
    <property type="evidence" value="ECO:0007669"/>
    <property type="project" value="UniProtKB-SubCell"/>
</dbReference>
<dbReference type="GO" id="GO:0005886">
    <property type="term" value="C:plasma membrane"/>
    <property type="evidence" value="ECO:0000318"/>
    <property type="project" value="GO_Central"/>
</dbReference>
<dbReference type="GO" id="GO:0070976">
    <property type="term" value="F:TIR domain binding"/>
    <property type="evidence" value="ECO:0007669"/>
    <property type="project" value="InterPro"/>
</dbReference>
<dbReference type="GO" id="GO:0035325">
    <property type="term" value="F:Toll-like receptor binding"/>
    <property type="evidence" value="ECO:0000318"/>
    <property type="project" value="GO_Central"/>
</dbReference>
<dbReference type="GO" id="GO:0050830">
    <property type="term" value="P:defense response to Gram-positive bacterium"/>
    <property type="evidence" value="ECO:0000318"/>
    <property type="project" value="GO_Central"/>
</dbReference>
<dbReference type="GO" id="GO:0006954">
    <property type="term" value="P:inflammatory response"/>
    <property type="evidence" value="ECO:0007669"/>
    <property type="project" value="UniProtKB-KW"/>
</dbReference>
<dbReference type="GO" id="GO:0045087">
    <property type="term" value="P:innate immune response"/>
    <property type="evidence" value="ECO:0000318"/>
    <property type="project" value="GO_Central"/>
</dbReference>
<dbReference type="GO" id="GO:0002755">
    <property type="term" value="P:MyD88-dependent toll-like receptor signaling pathway"/>
    <property type="evidence" value="ECO:0007669"/>
    <property type="project" value="InterPro"/>
</dbReference>
<dbReference type="GO" id="GO:0043123">
    <property type="term" value="P:positive regulation of canonical NF-kappaB signal transduction"/>
    <property type="evidence" value="ECO:0007669"/>
    <property type="project" value="InterPro"/>
</dbReference>
<dbReference type="GO" id="GO:0008063">
    <property type="term" value="P:Toll signaling pathway"/>
    <property type="evidence" value="ECO:0000318"/>
    <property type="project" value="GO_Central"/>
</dbReference>
<dbReference type="GO" id="GO:0034142">
    <property type="term" value="P:toll-like receptor 4 signaling pathway"/>
    <property type="evidence" value="ECO:0000318"/>
    <property type="project" value="GO_Central"/>
</dbReference>
<dbReference type="CDD" id="cd08312">
    <property type="entry name" value="Death_MyD88"/>
    <property type="match status" value="1"/>
</dbReference>
<dbReference type="FunFam" id="1.10.533.10:FF:000029">
    <property type="entry name" value="Myeloid differentiation primary response protein MyD88"/>
    <property type="match status" value="1"/>
</dbReference>
<dbReference type="FunFam" id="3.40.50.10140:FF:000005">
    <property type="entry name" value="Myeloid differentiation primary response protein MyD88"/>
    <property type="match status" value="1"/>
</dbReference>
<dbReference type="Gene3D" id="1.10.533.10">
    <property type="entry name" value="Death Domain, Fas"/>
    <property type="match status" value="1"/>
</dbReference>
<dbReference type="Gene3D" id="3.40.50.10140">
    <property type="entry name" value="Toll/interleukin-1 receptor homology (TIR) domain"/>
    <property type="match status" value="1"/>
</dbReference>
<dbReference type="InterPro" id="IPR011029">
    <property type="entry name" value="DEATH-like_dom_sf"/>
</dbReference>
<dbReference type="InterPro" id="IPR000488">
    <property type="entry name" value="Death_dom"/>
</dbReference>
<dbReference type="InterPro" id="IPR034249">
    <property type="entry name" value="MyD88_Death"/>
</dbReference>
<dbReference type="InterPro" id="IPR017281">
    <property type="entry name" value="Myelin_different_resp_MyD88"/>
</dbReference>
<dbReference type="InterPro" id="IPR000157">
    <property type="entry name" value="TIR_dom"/>
</dbReference>
<dbReference type="InterPro" id="IPR035897">
    <property type="entry name" value="Toll_tir_struct_dom_sf"/>
</dbReference>
<dbReference type="PANTHER" id="PTHR15079">
    <property type="entry name" value="MYD88"/>
    <property type="match status" value="1"/>
</dbReference>
<dbReference type="PANTHER" id="PTHR15079:SF3">
    <property type="entry name" value="MYELOID DIFFERENTIATION PRIMARY RESPONSE PROTEIN MYD88"/>
    <property type="match status" value="1"/>
</dbReference>
<dbReference type="Pfam" id="PF00531">
    <property type="entry name" value="Death"/>
    <property type="match status" value="1"/>
</dbReference>
<dbReference type="Pfam" id="PF13676">
    <property type="entry name" value="TIR_2"/>
    <property type="match status" value="1"/>
</dbReference>
<dbReference type="PIRSF" id="PIRSF037756">
    <property type="entry name" value="MyD88"/>
    <property type="match status" value="1"/>
</dbReference>
<dbReference type="SMART" id="SM00005">
    <property type="entry name" value="DEATH"/>
    <property type="match status" value="1"/>
</dbReference>
<dbReference type="SMART" id="SM00255">
    <property type="entry name" value="TIR"/>
    <property type="match status" value="1"/>
</dbReference>
<dbReference type="SUPFAM" id="SSF47986">
    <property type="entry name" value="DEATH domain"/>
    <property type="match status" value="1"/>
</dbReference>
<dbReference type="SUPFAM" id="SSF52200">
    <property type="entry name" value="Toll/Interleukin receptor TIR domain"/>
    <property type="match status" value="1"/>
</dbReference>
<dbReference type="PROSITE" id="PS50017">
    <property type="entry name" value="DEATH_DOMAIN"/>
    <property type="match status" value="1"/>
</dbReference>
<dbReference type="PROSITE" id="PS50104">
    <property type="entry name" value="TIR"/>
    <property type="match status" value="1"/>
</dbReference>
<keyword id="KW-0963">Cytoplasm</keyword>
<keyword id="KW-0391">Immunity</keyword>
<keyword id="KW-0395">Inflammatory response</keyword>
<keyword id="KW-0399">Innate immunity</keyword>
<keyword id="KW-1185">Reference proteome</keyword>
<reference key="1">
    <citation type="submission" date="2005-01" db="EMBL/GenBank/DDBJ databases">
        <authorList>
            <consortium name="NIH - Xenopus Gene Collection (XGC) project"/>
        </authorList>
    </citation>
    <scope>NUCLEOTIDE SEQUENCE [LARGE SCALE MRNA]</scope>
    <source>
        <tissue>Egg</tissue>
    </source>
</reference>
<protein>
    <recommendedName>
        <fullName>Myeloid differentiation primary response protein MyD88-B</fullName>
    </recommendedName>
    <alternativeName>
        <fullName>Toll/IL-1 receptor binding protein MyD88-B</fullName>
    </alternativeName>
</protein>
<sequence length="283" mass="32794">MACGSSMNSFDMNSIPLVALNYTVRHRLCLYLNPNAVVAADWTRLAEEMGYDYLEIRNFDRYPDSTMKLLEDWQKKCFRATVGGLLEMLKKMERNDILTDLAPLIEADCKKYLEKKHGPLPLQDDNVDSSEQYRITKSDDPYGSMPETFDAFICCCAQDILFVQEMISRLEQTDYKLKLCVFDRDVLPGTCLWSITSELIENRCRKMVVIISDDYLDSSECDFQTKFALSLGPGAREKRLIPVKYKPMKRPFPSILRFITLCDNTNPYTKVWFWDKLAKALAR</sequence>
<accession>Q5FWM2</accession>
<proteinExistence type="evidence at transcript level"/>
<gene>
    <name type="primary">myd88-b</name>
</gene>
<feature type="chain" id="PRO_0000393146" description="Myeloid differentiation primary response protein MyD88-B">
    <location>
        <begin position="1"/>
        <end position="283"/>
    </location>
</feature>
<feature type="domain" description="Death" evidence="2">
    <location>
        <begin position="27"/>
        <end position="105"/>
    </location>
</feature>
<feature type="domain" description="TIR" evidence="3">
    <location>
        <begin position="147"/>
        <end position="281"/>
    </location>
</feature>
<feature type="region of interest" description="Intermediate domain" evidence="1">
    <location>
        <begin position="106"/>
        <end position="143"/>
    </location>
</feature>
<organism>
    <name type="scientific">Xenopus laevis</name>
    <name type="common">African clawed frog</name>
    <dbReference type="NCBI Taxonomy" id="8355"/>
    <lineage>
        <taxon>Eukaryota</taxon>
        <taxon>Metazoa</taxon>
        <taxon>Chordata</taxon>
        <taxon>Craniata</taxon>
        <taxon>Vertebrata</taxon>
        <taxon>Euteleostomi</taxon>
        <taxon>Amphibia</taxon>
        <taxon>Batrachia</taxon>
        <taxon>Anura</taxon>
        <taxon>Pipoidea</taxon>
        <taxon>Pipidae</taxon>
        <taxon>Xenopodinae</taxon>
        <taxon>Xenopus</taxon>
        <taxon>Xenopus</taxon>
    </lineage>
</organism>
<name>MY88B_XENLA</name>